<keyword id="KW-0049">Antioxidant</keyword>
<keyword id="KW-0186">Copper</keyword>
<keyword id="KW-1015">Disulfide bond</keyword>
<keyword id="KW-0325">Glycoprotein</keyword>
<keyword id="KW-0333">Golgi apparatus</keyword>
<keyword id="KW-0479">Metal-binding</keyword>
<keyword id="KW-0560">Oxidoreductase</keyword>
<keyword id="KW-1185">Reference proteome</keyword>
<keyword id="KW-0964">Secreted</keyword>
<keyword id="KW-0732">Signal</keyword>
<keyword id="KW-0862">Zinc</keyword>
<feature type="signal peptide" evidence="4">
    <location>
        <begin position="1"/>
        <end position="15"/>
    </location>
</feature>
<feature type="chain" id="PRO_0000032859" description="Extracellular superoxide dismutase [Cu-Zn]">
    <location>
        <begin position="16"/>
        <end position="244"/>
    </location>
</feature>
<feature type="region of interest" description="Disordered" evidence="5">
    <location>
        <begin position="224"/>
        <end position="244"/>
    </location>
</feature>
<feature type="binding site" evidence="1">
    <location>
        <position position="121"/>
    </location>
    <ligand>
        <name>Cu cation</name>
        <dbReference type="ChEBI" id="CHEBI:23378"/>
        <note>catalytic</note>
    </ligand>
</feature>
<feature type="binding site" evidence="1">
    <location>
        <position position="123"/>
    </location>
    <ligand>
        <name>Cu cation</name>
        <dbReference type="ChEBI" id="CHEBI:23378"/>
        <note>catalytic</note>
    </ligand>
</feature>
<feature type="binding site" evidence="1">
    <location>
        <position position="138"/>
    </location>
    <ligand>
        <name>Cu cation</name>
        <dbReference type="ChEBI" id="CHEBI:23378"/>
        <note>catalytic</note>
    </ligand>
</feature>
<feature type="binding site" evidence="1">
    <location>
        <position position="138"/>
    </location>
    <ligand>
        <name>Zn(2+)</name>
        <dbReference type="ChEBI" id="CHEBI:29105"/>
        <note>structural</note>
    </ligand>
</feature>
<feature type="binding site" evidence="1">
    <location>
        <position position="146"/>
    </location>
    <ligand>
        <name>Zn(2+)</name>
        <dbReference type="ChEBI" id="CHEBI:29105"/>
        <note>structural</note>
    </ligand>
</feature>
<feature type="binding site" evidence="1">
    <location>
        <position position="149"/>
    </location>
    <ligand>
        <name>Zn(2+)</name>
        <dbReference type="ChEBI" id="CHEBI:29105"/>
        <note>structural</note>
    </ligand>
</feature>
<feature type="binding site" evidence="1">
    <location>
        <position position="152"/>
    </location>
    <ligand>
        <name>Zn(2+)</name>
        <dbReference type="ChEBI" id="CHEBI:29105"/>
        <note>structural</note>
    </ligand>
</feature>
<feature type="binding site" evidence="1">
    <location>
        <position position="188"/>
    </location>
    <ligand>
        <name>Cu cation</name>
        <dbReference type="ChEBI" id="CHEBI:23378"/>
        <note>catalytic</note>
    </ligand>
</feature>
<feature type="glycosylation site" description="N-linked (GlcNAc...) asparagine" evidence="4">
    <location>
        <position position="114"/>
    </location>
</feature>
<feature type="disulfide bond" evidence="1">
    <location>
        <begin position="70"/>
        <end position="215"/>
    </location>
</feature>
<feature type="disulfide bond" evidence="1">
    <location>
        <begin position="132"/>
        <end position="214"/>
    </location>
</feature>
<feature type="mutagenesis site" description="Homotetramerization." evidence="7">
    <original>D</original>
    <variation>V</variation>
    <location>
        <position position="48"/>
    </location>
</feature>
<feature type="sequence conflict" description="In Ref. 1; CAA48177." evidence="8" ref="1">
    <original>RRR</original>
    <variation>WRW</variation>
    <location>
        <begin position="235"/>
        <end position="237"/>
    </location>
</feature>
<gene>
    <name type="primary">Sod3</name>
    <name type="synonym">Sod-3</name>
</gene>
<proteinExistence type="evidence at protein level"/>
<reference key="1">
    <citation type="journal article" date="1993" name="Biochem. J.">
        <title>Isolation and characterization of a rat cDNA clone encoding a secreted superoxide dismutase reveals the epididymis to be a major site of its expression.</title>
        <authorList>
            <person name="Perry A.C.F."/>
            <person name="Jones R."/>
            <person name="Hall L."/>
        </authorList>
    </citation>
    <scope>NUCLEOTIDE SEQUENCE [MRNA]</scope>
    <source>
        <tissue>Epididymis</tissue>
    </source>
</reference>
<reference key="2">
    <citation type="journal article" date="1993" name="J. Biol. Chem.">
        <title>Purification and sequence of rat extracellular superoxide dismutase B secreted by C6 glioma.</title>
        <authorList>
            <person name="Willems J."/>
            <person name="Zwijsen A."/>
            <person name="Slegers H."/>
            <person name="Nicolai S."/>
            <person name="Bettadapura J."/>
            <person name="Raymackers J."/>
            <person name="Scarcez T."/>
        </authorList>
    </citation>
    <scope>NUCLEOTIDE SEQUENCE [MRNA]</scope>
    <scope>CHARACTERIZATION</scope>
</reference>
<reference key="3">
    <citation type="journal article" date="1996" name="Proc. Natl. Acad. Sci. U.S.A.">
        <title>The rat extracellular superoxide dismutase dimer is converted to a tetramer by the exchange of a single amino acid.</title>
        <authorList>
            <person name="Carlsson L.M."/>
            <person name="Marklund S.M."/>
            <person name="Edlund T."/>
        </authorList>
    </citation>
    <scope>NUCLEOTIDE SEQUENCE [MRNA]</scope>
    <scope>MUTAGENESIS</scope>
    <scope>CATALYTIC ACTIVITY</scope>
    <source>
        <strain>Sprague-Dawley</strain>
        <tissue>Uterus</tissue>
    </source>
</reference>
<reference key="4">
    <citation type="journal article" date="2004" name="Genome Res.">
        <title>The status, quality, and expansion of the NIH full-length cDNA project: the Mammalian Gene Collection (MGC).</title>
        <authorList>
            <consortium name="The MGC Project Team"/>
        </authorList>
    </citation>
    <scope>NUCLEOTIDE SEQUENCE [LARGE SCALE MRNA]</scope>
    <source>
        <tissue>Prostate</tissue>
    </source>
</reference>
<accession>Q08420</accession>
<accession>Q64667</accession>
<sequence length="244" mass="26620">MVAFLFCNLLLVACGSVTWTMSDTGESGVDLADRLDLVEKIGDTHSKDLEIWMELGKQREADAREMHAVCRVQPSAMLPPDQPQITGLVLFRQLGPSSRLEASFNLEGFPAEQNTSNHAIHVHEFGDLSQGCESTGPHYNPLGVPHPQHPGDFGNFVVRDGRLWKHRMGLATSLAGPHSILGRAVVVHAGEDDLGKGGNQASVQNGNAGRRLACCVVGTSNSEAWESQTKERKKRRRESECKTT</sequence>
<evidence type="ECO:0000250" key="1"/>
<evidence type="ECO:0000250" key="2">
    <source>
        <dbReference type="UniProtKB" id="O09164"/>
    </source>
</evidence>
<evidence type="ECO:0000250" key="3">
    <source>
        <dbReference type="UniProtKB" id="P08294"/>
    </source>
</evidence>
<evidence type="ECO:0000255" key="4"/>
<evidence type="ECO:0000256" key="5">
    <source>
        <dbReference type="SAM" id="MobiDB-lite"/>
    </source>
</evidence>
<evidence type="ECO:0000269" key="6">
    <source>
    </source>
</evidence>
<evidence type="ECO:0000269" key="7">
    <source>
    </source>
</evidence>
<evidence type="ECO:0000305" key="8"/>
<evidence type="ECO:0000305" key="9">
    <source>
    </source>
</evidence>
<dbReference type="EC" id="1.15.1.1" evidence="6"/>
<dbReference type="EMBL" id="X68041">
    <property type="protein sequence ID" value="CAA48177.1"/>
    <property type="molecule type" value="mRNA"/>
</dbReference>
<dbReference type="EMBL" id="Z24721">
    <property type="protein sequence ID" value="CAA80849.1"/>
    <property type="molecule type" value="mRNA"/>
</dbReference>
<dbReference type="EMBL" id="X94371">
    <property type="protein sequence ID" value="CAA64149.1"/>
    <property type="molecule type" value="mRNA"/>
</dbReference>
<dbReference type="EMBL" id="BC061861">
    <property type="protein sequence ID" value="AAH61861.1"/>
    <property type="molecule type" value="mRNA"/>
</dbReference>
<dbReference type="PIR" id="A49097">
    <property type="entry name" value="A49097"/>
</dbReference>
<dbReference type="RefSeq" id="NP_037012.1">
    <property type="nucleotide sequence ID" value="NM_012880.2"/>
</dbReference>
<dbReference type="SMR" id="Q08420"/>
<dbReference type="FunCoup" id="Q08420">
    <property type="interactions" value="24"/>
</dbReference>
<dbReference type="STRING" id="10116.ENSRNOP00000005155"/>
<dbReference type="GlyCosmos" id="Q08420">
    <property type="glycosylation" value="1 site, No reported glycans"/>
</dbReference>
<dbReference type="GlyGen" id="Q08420">
    <property type="glycosylation" value="1 site"/>
</dbReference>
<dbReference type="PhosphoSitePlus" id="Q08420"/>
<dbReference type="PaxDb" id="10116-ENSRNOP00000005155"/>
<dbReference type="Ensembl" id="ENSRNOT00000005155.4">
    <property type="protein sequence ID" value="ENSRNOP00000005155.2"/>
    <property type="gene ID" value="ENSRNOG00000003869.4"/>
</dbReference>
<dbReference type="GeneID" id="25352"/>
<dbReference type="KEGG" id="rno:25352"/>
<dbReference type="AGR" id="RGD:3733"/>
<dbReference type="CTD" id="6649"/>
<dbReference type="RGD" id="3733">
    <property type="gene designation" value="Sod3"/>
</dbReference>
<dbReference type="eggNOG" id="KOG0441">
    <property type="taxonomic scope" value="Eukaryota"/>
</dbReference>
<dbReference type="GeneTree" id="ENSGT00940000162224"/>
<dbReference type="HOGENOM" id="CLU_056632_3_1_1"/>
<dbReference type="InParanoid" id="Q08420"/>
<dbReference type="OMA" id="DGSLWKY"/>
<dbReference type="OrthoDB" id="666972at2759"/>
<dbReference type="PhylomeDB" id="Q08420"/>
<dbReference type="TreeFam" id="TF105133"/>
<dbReference type="Reactome" id="R-RNO-3299685">
    <property type="pathway name" value="Detoxification of Reactive Oxygen Species"/>
</dbReference>
<dbReference type="PRO" id="PR:Q08420"/>
<dbReference type="Proteomes" id="UP000002494">
    <property type="component" value="Chromosome 14"/>
</dbReference>
<dbReference type="Bgee" id="ENSRNOG00000003869">
    <property type="expression patterns" value="Expressed in adult mammalian kidney and 19 other cell types or tissues"/>
</dbReference>
<dbReference type="GO" id="GO:0005615">
    <property type="term" value="C:extracellular space"/>
    <property type="evidence" value="ECO:0000314"/>
    <property type="project" value="RGD"/>
</dbReference>
<dbReference type="GO" id="GO:0005794">
    <property type="term" value="C:Golgi apparatus"/>
    <property type="evidence" value="ECO:0007669"/>
    <property type="project" value="UniProtKB-SubCell"/>
</dbReference>
<dbReference type="GO" id="GO:0005507">
    <property type="term" value="F:copper ion binding"/>
    <property type="evidence" value="ECO:0000318"/>
    <property type="project" value="GO_Central"/>
</dbReference>
<dbReference type="GO" id="GO:0060090">
    <property type="term" value="F:molecular adaptor activity"/>
    <property type="evidence" value="ECO:0000266"/>
    <property type="project" value="RGD"/>
</dbReference>
<dbReference type="GO" id="GO:0004784">
    <property type="term" value="F:superoxide dismutase activity"/>
    <property type="evidence" value="ECO:0000314"/>
    <property type="project" value="RGD"/>
</dbReference>
<dbReference type="GO" id="GO:0097746">
    <property type="term" value="P:blood vessel diameter maintenance"/>
    <property type="evidence" value="ECO:0000315"/>
    <property type="project" value="RGD"/>
</dbReference>
<dbReference type="GO" id="GO:0019430">
    <property type="term" value="P:removal of superoxide radicals"/>
    <property type="evidence" value="ECO:0000318"/>
    <property type="project" value="GO_Central"/>
</dbReference>
<dbReference type="GO" id="GO:0046688">
    <property type="term" value="P:response to copper ion"/>
    <property type="evidence" value="ECO:0000315"/>
    <property type="project" value="RGD"/>
</dbReference>
<dbReference type="GO" id="GO:0001666">
    <property type="term" value="P:response to hypoxia"/>
    <property type="evidence" value="ECO:0000266"/>
    <property type="project" value="RGD"/>
</dbReference>
<dbReference type="GO" id="GO:0006979">
    <property type="term" value="P:response to oxidative stress"/>
    <property type="evidence" value="ECO:0000270"/>
    <property type="project" value="RGD"/>
</dbReference>
<dbReference type="CDD" id="cd00305">
    <property type="entry name" value="Cu-Zn_Superoxide_Dismutase"/>
    <property type="match status" value="1"/>
</dbReference>
<dbReference type="FunFam" id="2.60.40.200:FF:000008">
    <property type="entry name" value="Superoxide dismutase [Cu-Zn]"/>
    <property type="match status" value="1"/>
</dbReference>
<dbReference type="Gene3D" id="2.60.40.200">
    <property type="entry name" value="Superoxide dismutase, copper/zinc binding domain"/>
    <property type="match status" value="1"/>
</dbReference>
<dbReference type="InterPro" id="IPR036423">
    <property type="entry name" value="SOD-like_Cu/Zn_dom_sf"/>
</dbReference>
<dbReference type="InterPro" id="IPR024134">
    <property type="entry name" value="SOD_Cu/Zn_/chaperone"/>
</dbReference>
<dbReference type="InterPro" id="IPR018152">
    <property type="entry name" value="SOD_Cu/Zn_BS"/>
</dbReference>
<dbReference type="InterPro" id="IPR001424">
    <property type="entry name" value="SOD_Cu_Zn_dom"/>
</dbReference>
<dbReference type="PANTHER" id="PTHR10003">
    <property type="entry name" value="SUPEROXIDE DISMUTASE CU-ZN -RELATED"/>
    <property type="match status" value="1"/>
</dbReference>
<dbReference type="Pfam" id="PF00080">
    <property type="entry name" value="Sod_Cu"/>
    <property type="match status" value="1"/>
</dbReference>
<dbReference type="PRINTS" id="PR00068">
    <property type="entry name" value="CUZNDISMTASE"/>
</dbReference>
<dbReference type="SUPFAM" id="SSF49329">
    <property type="entry name" value="Cu,Zn superoxide dismutase-like"/>
    <property type="match status" value="1"/>
</dbReference>
<dbReference type="PROSITE" id="PS00087">
    <property type="entry name" value="SOD_CU_ZN_1"/>
    <property type="match status" value="1"/>
</dbReference>
<dbReference type="PROSITE" id="PS00332">
    <property type="entry name" value="SOD_CU_ZN_2"/>
    <property type="match status" value="1"/>
</dbReference>
<name>SODE_RAT</name>
<comment type="function">
    <text evidence="1">Protect the extracellular space from toxic effect of reactive oxygen intermediates by converting superoxide radicals into hydrogen peroxide and oxygen.</text>
</comment>
<comment type="catalytic activity">
    <reaction evidence="6">
        <text>2 superoxide + 2 H(+) = H2O2 + O2</text>
        <dbReference type="Rhea" id="RHEA:20696"/>
        <dbReference type="ChEBI" id="CHEBI:15378"/>
        <dbReference type="ChEBI" id="CHEBI:15379"/>
        <dbReference type="ChEBI" id="CHEBI:16240"/>
        <dbReference type="ChEBI" id="CHEBI:18421"/>
        <dbReference type="EC" id="1.15.1.1"/>
    </reaction>
    <physiologicalReaction direction="left-to-right" evidence="9">
        <dbReference type="Rhea" id="RHEA:20697"/>
    </physiologicalReaction>
</comment>
<comment type="cofactor">
    <cofactor evidence="1">
        <name>Cu cation</name>
        <dbReference type="ChEBI" id="CHEBI:23378"/>
    </cofactor>
    <text evidence="1">Binds 1 copper ion per subunit.</text>
</comment>
<comment type="cofactor">
    <cofactor evidence="1">
        <name>Zn(2+)</name>
        <dbReference type="ChEBI" id="CHEBI:29105"/>
    </cofactor>
    <text evidence="1">Binds 1 zinc ion per subunit.</text>
</comment>
<comment type="subunit">
    <text evidence="3 7">Homodimer (PubMed:8643556). Interacts with ATP7A; this interaction is copper-dependent and is required for SOD3 activity.</text>
</comment>
<comment type="subcellular location">
    <subcellularLocation>
        <location>Secreted</location>
        <location>Extracellular space</location>
    </subcellularLocation>
    <subcellularLocation>
        <location evidence="2">Golgi apparatus</location>
        <location evidence="2">trans-Golgi network</location>
    </subcellularLocation>
</comment>
<comment type="similarity">
    <text evidence="8">Belongs to the Cu-Zn superoxide dismutase family.</text>
</comment>
<protein>
    <recommendedName>
        <fullName>Extracellular superoxide dismutase [Cu-Zn]</fullName>
        <shortName>EC-SOD</shortName>
        <ecNumber evidence="6">1.15.1.1</ecNumber>
    </recommendedName>
    <alternativeName>
        <fullName>Superoxide dismutase B</fullName>
    </alternativeName>
</protein>
<organism>
    <name type="scientific">Rattus norvegicus</name>
    <name type="common">Rat</name>
    <dbReference type="NCBI Taxonomy" id="10116"/>
    <lineage>
        <taxon>Eukaryota</taxon>
        <taxon>Metazoa</taxon>
        <taxon>Chordata</taxon>
        <taxon>Craniata</taxon>
        <taxon>Vertebrata</taxon>
        <taxon>Euteleostomi</taxon>
        <taxon>Mammalia</taxon>
        <taxon>Eutheria</taxon>
        <taxon>Euarchontoglires</taxon>
        <taxon>Glires</taxon>
        <taxon>Rodentia</taxon>
        <taxon>Myomorpha</taxon>
        <taxon>Muroidea</taxon>
        <taxon>Muridae</taxon>
        <taxon>Murinae</taxon>
        <taxon>Rattus</taxon>
    </lineage>
</organism>